<reference key="1">
    <citation type="journal article" date="2011" name="BMC Genomics">
        <title>Complete genome sequence of the filamentous anoxygenic phototrophic bacterium Chloroflexus aurantiacus.</title>
        <authorList>
            <person name="Tang K.H."/>
            <person name="Barry K."/>
            <person name="Chertkov O."/>
            <person name="Dalin E."/>
            <person name="Han C.S."/>
            <person name="Hauser L.J."/>
            <person name="Honchak B.M."/>
            <person name="Karbach L.E."/>
            <person name="Land M.L."/>
            <person name="Lapidus A."/>
            <person name="Larimer F.W."/>
            <person name="Mikhailova N."/>
            <person name="Pitluck S."/>
            <person name="Pierson B.K."/>
            <person name="Blankenship R.E."/>
        </authorList>
    </citation>
    <scope>NUCLEOTIDE SEQUENCE [LARGE SCALE GENOMIC DNA]</scope>
    <source>
        <strain>ATCC 29366 / DSM 635 / J-10-fl</strain>
    </source>
</reference>
<proteinExistence type="inferred from homology"/>
<evidence type="ECO:0000255" key="1">
    <source>
        <dbReference type="HAMAP-Rule" id="MF_01347"/>
    </source>
</evidence>
<dbReference type="EC" id="7.1.2.2" evidence="1"/>
<dbReference type="EMBL" id="CP000909">
    <property type="protein sequence ID" value="ABY36240.1"/>
    <property type="molecule type" value="Genomic_DNA"/>
</dbReference>
<dbReference type="RefSeq" id="WP_012258893.1">
    <property type="nucleotide sequence ID" value="NC_010175.1"/>
</dbReference>
<dbReference type="RefSeq" id="YP_001636629.1">
    <property type="nucleotide sequence ID" value="NC_010175.1"/>
</dbReference>
<dbReference type="SMR" id="A9WGS4"/>
<dbReference type="FunCoup" id="A9WGS4">
    <property type="interactions" value="349"/>
</dbReference>
<dbReference type="STRING" id="324602.Caur_3041"/>
<dbReference type="EnsemblBacteria" id="ABY36240">
    <property type="protein sequence ID" value="ABY36240"/>
    <property type="gene ID" value="Caur_3041"/>
</dbReference>
<dbReference type="KEGG" id="cau:Caur_3041"/>
<dbReference type="PATRIC" id="fig|324602.8.peg.3442"/>
<dbReference type="eggNOG" id="COG0055">
    <property type="taxonomic scope" value="Bacteria"/>
</dbReference>
<dbReference type="HOGENOM" id="CLU_022398_0_2_0"/>
<dbReference type="InParanoid" id="A9WGS4"/>
<dbReference type="Proteomes" id="UP000002008">
    <property type="component" value="Chromosome"/>
</dbReference>
<dbReference type="GO" id="GO:0005886">
    <property type="term" value="C:plasma membrane"/>
    <property type="evidence" value="ECO:0007669"/>
    <property type="project" value="UniProtKB-SubCell"/>
</dbReference>
<dbReference type="GO" id="GO:0045259">
    <property type="term" value="C:proton-transporting ATP synthase complex"/>
    <property type="evidence" value="ECO:0007669"/>
    <property type="project" value="UniProtKB-KW"/>
</dbReference>
<dbReference type="GO" id="GO:0005524">
    <property type="term" value="F:ATP binding"/>
    <property type="evidence" value="ECO:0007669"/>
    <property type="project" value="UniProtKB-UniRule"/>
</dbReference>
<dbReference type="GO" id="GO:0016887">
    <property type="term" value="F:ATP hydrolysis activity"/>
    <property type="evidence" value="ECO:0007669"/>
    <property type="project" value="InterPro"/>
</dbReference>
<dbReference type="GO" id="GO:0046933">
    <property type="term" value="F:proton-transporting ATP synthase activity, rotational mechanism"/>
    <property type="evidence" value="ECO:0007669"/>
    <property type="project" value="UniProtKB-UniRule"/>
</dbReference>
<dbReference type="CDD" id="cd18110">
    <property type="entry name" value="ATP-synt_F1_beta_C"/>
    <property type="match status" value="1"/>
</dbReference>
<dbReference type="CDD" id="cd18115">
    <property type="entry name" value="ATP-synt_F1_beta_N"/>
    <property type="match status" value="1"/>
</dbReference>
<dbReference type="CDD" id="cd01133">
    <property type="entry name" value="F1-ATPase_beta_CD"/>
    <property type="match status" value="1"/>
</dbReference>
<dbReference type="FunFam" id="1.10.1140.10:FF:000001">
    <property type="entry name" value="ATP synthase subunit beta"/>
    <property type="match status" value="1"/>
</dbReference>
<dbReference type="FunFam" id="3.40.50.300:FF:000004">
    <property type="entry name" value="ATP synthase subunit beta"/>
    <property type="match status" value="1"/>
</dbReference>
<dbReference type="Gene3D" id="2.40.10.170">
    <property type="match status" value="1"/>
</dbReference>
<dbReference type="Gene3D" id="1.10.1140.10">
    <property type="entry name" value="Bovine Mitochondrial F1-atpase, Atp Synthase Beta Chain, Chain D, domain 3"/>
    <property type="match status" value="1"/>
</dbReference>
<dbReference type="Gene3D" id="3.40.50.300">
    <property type="entry name" value="P-loop containing nucleotide triphosphate hydrolases"/>
    <property type="match status" value="1"/>
</dbReference>
<dbReference type="HAMAP" id="MF_01347">
    <property type="entry name" value="ATP_synth_beta_bact"/>
    <property type="match status" value="1"/>
</dbReference>
<dbReference type="InterPro" id="IPR003593">
    <property type="entry name" value="AAA+_ATPase"/>
</dbReference>
<dbReference type="InterPro" id="IPR055190">
    <property type="entry name" value="ATP-synt_VA_C"/>
</dbReference>
<dbReference type="InterPro" id="IPR005722">
    <property type="entry name" value="ATP_synth_F1_bsu"/>
</dbReference>
<dbReference type="InterPro" id="IPR020003">
    <property type="entry name" value="ATPase_a/bsu_AS"/>
</dbReference>
<dbReference type="InterPro" id="IPR050053">
    <property type="entry name" value="ATPase_alpha/beta_chains"/>
</dbReference>
<dbReference type="InterPro" id="IPR004100">
    <property type="entry name" value="ATPase_F1/V1/A1_a/bsu_N"/>
</dbReference>
<dbReference type="InterPro" id="IPR036121">
    <property type="entry name" value="ATPase_F1/V1/A1_a/bsu_N_sf"/>
</dbReference>
<dbReference type="InterPro" id="IPR000194">
    <property type="entry name" value="ATPase_F1/V1/A1_a/bsu_nucl-bd"/>
</dbReference>
<dbReference type="InterPro" id="IPR024034">
    <property type="entry name" value="ATPase_F1/V1_b/a_C"/>
</dbReference>
<dbReference type="InterPro" id="IPR027417">
    <property type="entry name" value="P-loop_NTPase"/>
</dbReference>
<dbReference type="NCBIfam" id="TIGR01039">
    <property type="entry name" value="atpD"/>
    <property type="match status" value="1"/>
</dbReference>
<dbReference type="PANTHER" id="PTHR15184">
    <property type="entry name" value="ATP SYNTHASE"/>
    <property type="match status" value="1"/>
</dbReference>
<dbReference type="PANTHER" id="PTHR15184:SF71">
    <property type="entry name" value="ATP SYNTHASE SUBUNIT BETA, MITOCHONDRIAL"/>
    <property type="match status" value="1"/>
</dbReference>
<dbReference type="Pfam" id="PF00006">
    <property type="entry name" value="ATP-synt_ab"/>
    <property type="match status" value="1"/>
</dbReference>
<dbReference type="Pfam" id="PF02874">
    <property type="entry name" value="ATP-synt_ab_N"/>
    <property type="match status" value="1"/>
</dbReference>
<dbReference type="Pfam" id="PF22919">
    <property type="entry name" value="ATP-synt_VA_C"/>
    <property type="match status" value="1"/>
</dbReference>
<dbReference type="SMART" id="SM00382">
    <property type="entry name" value="AAA"/>
    <property type="match status" value="1"/>
</dbReference>
<dbReference type="SUPFAM" id="SSF47917">
    <property type="entry name" value="C-terminal domain of alpha and beta subunits of F1 ATP synthase"/>
    <property type="match status" value="1"/>
</dbReference>
<dbReference type="SUPFAM" id="SSF50615">
    <property type="entry name" value="N-terminal domain of alpha and beta subunits of F1 ATP synthase"/>
    <property type="match status" value="1"/>
</dbReference>
<dbReference type="SUPFAM" id="SSF52540">
    <property type="entry name" value="P-loop containing nucleoside triphosphate hydrolases"/>
    <property type="match status" value="1"/>
</dbReference>
<dbReference type="PROSITE" id="PS00152">
    <property type="entry name" value="ATPASE_ALPHA_BETA"/>
    <property type="match status" value="1"/>
</dbReference>
<keyword id="KW-0066">ATP synthesis</keyword>
<keyword id="KW-0067">ATP-binding</keyword>
<keyword id="KW-1003">Cell membrane</keyword>
<keyword id="KW-0139">CF(1)</keyword>
<keyword id="KW-0375">Hydrogen ion transport</keyword>
<keyword id="KW-0406">Ion transport</keyword>
<keyword id="KW-0472">Membrane</keyword>
<keyword id="KW-0547">Nucleotide-binding</keyword>
<keyword id="KW-1185">Reference proteome</keyword>
<keyword id="KW-1278">Translocase</keyword>
<keyword id="KW-0813">Transport</keyword>
<accession>A9WGS4</accession>
<sequence length="471" mass="51701">MPAKGVIQEIIGVVIRAKFPEDEVPEIYNAIEIPLGNGDRLVCEVQQQLGNGVVKAVAMGSTDGLRRGLEVIDTGRPIAVPVGPATLGRVFNVLGDPIDGMGPIGPEVERRPIHRDPPSFEEQNTQAQIFETGIKVIDLIAPFTRGGKTAIFGGAGVGKTVVIQELIANIAKEQSGFSVFAGVGERSREGNDLIHEMKEARIDENTTVFDKTVMVFGQMNEPPGARLRVGLTALTMAEYFRDEGRDILLFIDNIFRFVQAGSEVSSLLGRMPSQVGYQPTLGTEMGELQERITSTKRGSITSMQAVYVPADDYTDPAPATVFSHLDATISLERSIAERAIFPAVDPLASTSRILDPNIVGEEHYRVAQEVKRVLQRYKDLKDIIAILGMEELSDEDKLTVQRARKIELFFSQPFTVAQQFTGRPGKYVPVKKTVESFARLLNGEGDHIPESFFYMQGDFDDVLAAYEASQK</sequence>
<gene>
    <name evidence="1" type="primary">atpD</name>
    <name type="ordered locus">Caur_3041</name>
</gene>
<protein>
    <recommendedName>
        <fullName evidence="1">ATP synthase subunit beta</fullName>
        <ecNumber evidence="1">7.1.2.2</ecNumber>
    </recommendedName>
    <alternativeName>
        <fullName evidence="1">ATP synthase F1 sector subunit beta</fullName>
    </alternativeName>
    <alternativeName>
        <fullName evidence="1">F-ATPase subunit beta</fullName>
    </alternativeName>
</protein>
<name>ATPB_CHLAA</name>
<comment type="function">
    <text evidence="1">Produces ATP from ADP in the presence of a proton gradient across the membrane. The catalytic sites are hosted primarily by the beta subunits.</text>
</comment>
<comment type="catalytic activity">
    <reaction evidence="1">
        <text>ATP + H2O + 4 H(+)(in) = ADP + phosphate + 5 H(+)(out)</text>
        <dbReference type="Rhea" id="RHEA:57720"/>
        <dbReference type="ChEBI" id="CHEBI:15377"/>
        <dbReference type="ChEBI" id="CHEBI:15378"/>
        <dbReference type="ChEBI" id="CHEBI:30616"/>
        <dbReference type="ChEBI" id="CHEBI:43474"/>
        <dbReference type="ChEBI" id="CHEBI:456216"/>
        <dbReference type="EC" id="7.1.2.2"/>
    </reaction>
</comment>
<comment type="subunit">
    <text evidence="1">F-type ATPases have 2 components, CF(1) - the catalytic core - and CF(0) - the membrane proton channel. CF(1) has five subunits: alpha(3), beta(3), gamma(1), delta(1), epsilon(1). CF(0) has four main subunits: a(1), b(1), b'(1) and c(9-12).</text>
</comment>
<comment type="subcellular location">
    <subcellularLocation>
        <location evidence="1">Cell membrane</location>
        <topology evidence="1">Peripheral membrane protein</topology>
    </subcellularLocation>
</comment>
<comment type="similarity">
    <text evidence="1">Belongs to the ATPase alpha/beta chains family.</text>
</comment>
<organism>
    <name type="scientific">Chloroflexus aurantiacus (strain ATCC 29366 / DSM 635 / J-10-fl)</name>
    <dbReference type="NCBI Taxonomy" id="324602"/>
    <lineage>
        <taxon>Bacteria</taxon>
        <taxon>Bacillati</taxon>
        <taxon>Chloroflexota</taxon>
        <taxon>Chloroflexia</taxon>
        <taxon>Chloroflexales</taxon>
        <taxon>Chloroflexineae</taxon>
        <taxon>Chloroflexaceae</taxon>
        <taxon>Chloroflexus</taxon>
    </lineage>
</organism>
<feature type="chain" id="PRO_0000339512" description="ATP synthase subunit beta">
    <location>
        <begin position="1"/>
        <end position="471"/>
    </location>
</feature>
<feature type="binding site" evidence="1">
    <location>
        <begin position="153"/>
        <end position="160"/>
    </location>
    <ligand>
        <name>ATP</name>
        <dbReference type="ChEBI" id="CHEBI:30616"/>
    </ligand>
</feature>